<name>ARGE_SALPK</name>
<dbReference type="EC" id="3.5.1.16" evidence="1"/>
<dbReference type="EMBL" id="FM200053">
    <property type="protein sequence ID" value="CAR61967.1"/>
    <property type="molecule type" value="Genomic_DNA"/>
</dbReference>
<dbReference type="RefSeq" id="WP_000800204.1">
    <property type="nucleotide sequence ID" value="NC_011147.1"/>
</dbReference>
<dbReference type="SMR" id="B5BJN1"/>
<dbReference type="MEROPS" id="M20.974"/>
<dbReference type="KEGG" id="sek:SSPA3684"/>
<dbReference type="HOGENOM" id="CLU_021802_2_4_6"/>
<dbReference type="UniPathway" id="UPA00068">
    <property type="reaction ID" value="UER00110"/>
</dbReference>
<dbReference type="Proteomes" id="UP000001869">
    <property type="component" value="Chromosome"/>
</dbReference>
<dbReference type="GO" id="GO:0005737">
    <property type="term" value="C:cytoplasm"/>
    <property type="evidence" value="ECO:0007669"/>
    <property type="project" value="UniProtKB-SubCell"/>
</dbReference>
<dbReference type="GO" id="GO:0008777">
    <property type="term" value="F:acetylornithine deacetylase activity"/>
    <property type="evidence" value="ECO:0007669"/>
    <property type="project" value="UniProtKB-UniRule"/>
</dbReference>
<dbReference type="GO" id="GO:0008270">
    <property type="term" value="F:zinc ion binding"/>
    <property type="evidence" value="ECO:0007669"/>
    <property type="project" value="UniProtKB-UniRule"/>
</dbReference>
<dbReference type="GO" id="GO:0006526">
    <property type="term" value="P:L-arginine biosynthetic process"/>
    <property type="evidence" value="ECO:0007669"/>
    <property type="project" value="UniProtKB-UniRule"/>
</dbReference>
<dbReference type="CDD" id="cd03894">
    <property type="entry name" value="M20_ArgE"/>
    <property type="match status" value="1"/>
</dbReference>
<dbReference type="FunFam" id="3.30.70.360:FF:000003">
    <property type="entry name" value="Acetylornithine deacetylase"/>
    <property type="match status" value="1"/>
</dbReference>
<dbReference type="Gene3D" id="3.30.70.360">
    <property type="match status" value="1"/>
</dbReference>
<dbReference type="Gene3D" id="3.40.630.10">
    <property type="entry name" value="Zn peptidases"/>
    <property type="match status" value="1"/>
</dbReference>
<dbReference type="HAMAP" id="MF_01108">
    <property type="entry name" value="ArgE"/>
    <property type="match status" value="1"/>
</dbReference>
<dbReference type="InterPro" id="IPR010169">
    <property type="entry name" value="AcOrn-deacetyl"/>
</dbReference>
<dbReference type="InterPro" id="IPR001261">
    <property type="entry name" value="ArgE/DapE_CS"/>
</dbReference>
<dbReference type="InterPro" id="IPR036264">
    <property type="entry name" value="Bact_exopeptidase_dim_dom"/>
</dbReference>
<dbReference type="InterPro" id="IPR002933">
    <property type="entry name" value="Peptidase_M20"/>
</dbReference>
<dbReference type="InterPro" id="IPR011650">
    <property type="entry name" value="Peptidase_M20_dimer"/>
</dbReference>
<dbReference type="InterPro" id="IPR050072">
    <property type="entry name" value="Peptidase_M20A"/>
</dbReference>
<dbReference type="NCBIfam" id="TIGR01892">
    <property type="entry name" value="AcOrn-deacetyl"/>
    <property type="match status" value="1"/>
</dbReference>
<dbReference type="NCBIfam" id="NF003474">
    <property type="entry name" value="PRK05111.1"/>
    <property type="match status" value="1"/>
</dbReference>
<dbReference type="PANTHER" id="PTHR43808">
    <property type="entry name" value="ACETYLORNITHINE DEACETYLASE"/>
    <property type="match status" value="1"/>
</dbReference>
<dbReference type="PANTHER" id="PTHR43808:SF1">
    <property type="entry name" value="ACETYLORNITHINE DEACETYLASE"/>
    <property type="match status" value="1"/>
</dbReference>
<dbReference type="Pfam" id="PF07687">
    <property type="entry name" value="M20_dimer"/>
    <property type="match status" value="1"/>
</dbReference>
<dbReference type="Pfam" id="PF01546">
    <property type="entry name" value="Peptidase_M20"/>
    <property type="match status" value="1"/>
</dbReference>
<dbReference type="SUPFAM" id="SSF55031">
    <property type="entry name" value="Bacterial exopeptidase dimerisation domain"/>
    <property type="match status" value="1"/>
</dbReference>
<dbReference type="SUPFAM" id="SSF53187">
    <property type="entry name" value="Zn-dependent exopeptidases"/>
    <property type="match status" value="1"/>
</dbReference>
<dbReference type="PROSITE" id="PS00758">
    <property type="entry name" value="ARGE_DAPE_CPG2_1"/>
    <property type="match status" value="1"/>
</dbReference>
<dbReference type="PROSITE" id="PS00759">
    <property type="entry name" value="ARGE_DAPE_CPG2_2"/>
    <property type="match status" value="1"/>
</dbReference>
<reference key="1">
    <citation type="journal article" date="2009" name="BMC Genomics">
        <title>Pseudogene accumulation in the evolutionary histories of Salmonella enterica serovars Paratyphi A and Typhi.</title>
        <authorList>
            <person name="Holt K.E."/>
            <person name="Thomson N.R."/>
            <person name="Wain J."/>
            <person name="Langridge G.C."/>
            <person name="Hasan R."/>
            <person name="Bhutta Z.A."/>
            <person name="Quail M.A."/>
            <person name="Norbertczak H."/>
            <person name="Walker D."/>
            <person name="Simmonds M."/>
            <person name="White B."/>
            <person name="Bason N."/>
            <person name="Mungall K."/>
            <person name="Dougan G."/>
            <person name="Parkhill J."/>
        </authorList>
    </citation>
    <scope>NUCLEOTIDE SEQUENCE [LARGE SCALE GENOMIC DNA]</scope>
    <source>
        <strain>AKU_12601</strain>
    </source>
</reference>
<feature type="chain" id="PRO_1000137079" description="Acetylornithine deacetylase">
    <location>
        <begin position="1"/>
        <end position="383"/>
    </location>
</feature>
<feature type="active site" evidence="1">
    <location>
        <position position="82"/>
    </location>
</feature>
<feature type="active site" evidence="1">
    <location>
        <position position="144"/>
    </location>
</feature>
<feature type="binding site" evidence="1">
    <location>
        <position position="80"/>
    </location>
    <ligand>
        <name>Zn(2+)</name>
        <dbReference type="ChEBI" id="CHEBI:29105"/>
        <label>1</label>
    </ligand>
</feature>
<feature type="binding site" evidence="1">
    <location>
        <position position="112"/>
    </location>
    <ligand>
        <name>Zn(2+)</name>
        <dbReference type="ChEBI" id="CHEBI:29105"/>
        <label>1</label>
    </ligand>
</feature>
<feature type="binding site" evidence="1">
    <location>
        <position position="112"/>
    </location>
    <ligand>
        <name>Zn(2+)</name>
        <dbReference type="ChEBI" id="CHEBI:29105"/>
        <label>2</label>
    </ligand>
</feature>
<feature type="binding site" evidence="1">
    <location>
        <position position="145"/>
    </location>
    <ligand>
        <name>Zn(2+)</name>
        <dbReference type="ChEBI" id="CHEBI:29105"/>
        <label>2</label>
    </ligand>
</feature>
<feature type="binding site" evidence="1">
    <location>
        <position position="169"/>
    </location>
    <ligand>
        <name>Zn(2+)</name>
        <dbReference type="ChEBI" id="CHEBI:29105"/>
        <label>1</label>
    </ligand>
</feature>
<feature type="binding site" evidence="1">
    <location>
        <position position="355"/>
    </location>
    <ligand>
        <name>Zn(2+)</name>
        <dbReference type="ChEBI" id="CHEBI:29105"/>
        <label>2</label>
    </ligand>
</feature>
<proteinExistence type="inferred from homology"/>
<organism>
    <name type="scientific">Salmonella paratyphi A (strain AKU_12601)</name>
    <dbReference type="NCBI Taxonomy" id="554290"/>
    <lineage>
        <taxon>Bacteria</taxon>
        <taxon>Pseudomonadati</taxon>
        <taxon>Pseudomonadota</taxon>
        <taxon>Gammaproteobacteria</taxon>
        <taxon>Enterobacterales</taxon>
        <taxon>Enterobacteriaceae</taxon>
        <taxon>Salmonella</taxon>
    </lineage>
</organism>
<protein>
    <recommendedName>
        <fullName evidence="1">Acetylornithine deacetylase</fullName>
        <shortName evidence="1">AO</shortName>
        <shortName evidence="1">Acetylornithinase</shortName>
        <ecNumber evidence="1">3.5.1.16</ecNumber>
    </recommendedName>
    <alternativeName>
        <fullName evidence="1">N-acetylornithinase</fullName>
        <shortName evidence="1">NAO</shortName>
    </alternativeName>
</protein>
<evidence type="ECO:0000255" key="1">
    <source>
        <dbReference type="HAMAP-Rule" id="MF_01108"/>
    </source>
</evidence>
<comment type="function">
    <text evidence="1">Catalyzes the hydrolysis of the amide bond of N(2)-acetylated L-amino acids. Cleaves the acetyl group from N-acetyl-L-ornithine to form L-ornithine, an intermediate in L-arginine biosynthesis pathway, and a branchpoint in the synthesis of polyamines.</text>
</comment>
<comment type="catalytic activity">
    <reaction evidence="1">
        <text>N(2)-acetyl-L-ornithine + H2O = L-ornithine + acetate</text>
        <dbReference type="Rhea" id="RHEA:15941"/>
        <dbReference type="ChEBI" id="CHEBI:15377"/>
        <dbReference type="ChEBI" id="CHEBI:30089"/>
        <dbReference type="ChEBI" id="CHEBI:46911"/>
        <dbReference type="ChEBI" id="CHEBI:57805"/>
        <dbReference type="EC" id="3.5.1.16"/>
    </reaction>
</comment>
<comment type="cofactor">
    <cofactor evidence="1">
        <name>Zn(2+)</name>
        <dbReference type="ChEBI" id="CHEBI:29105"/>
    </cofactor>
    <cofactor evidence="1">
        <name>Co(2+)</name>
        <dbReference type="ChEBI" id="CHEBI:48828"/>
    </cofactor>
    <text evidence="1">Binds 2 Zn(2+) or Co(2+) ions per subunit.</text>
</comment>
<comment type="cofactor">
    <cofactor evidence="1">
        <name>glutathione</name>
        <dbReference type="ChEBI" id="CHEBI:57925"/>
    </cofactor>
</comment>
<comment type="pathway">
    <text evidence="1">Amino-acid biosynthesis; L-arginine biosynthesis; L-ornithine from N(2)-acetyl-L-ornithine (linear): step 1/1.</text>
</comment>
<comment type="subunit">
    <text evidence="1">Homodimer.</text>
</comment>
<comment type="subcellular location">
    <subcellularLocation>
        <location evidence="1">Cytoplasm</location>
    </subcellularLocation>
</comment>
<comment type="similarity">
    <text evidence="1">Belongs to the peptidase M20A family. ArgE subfamily.</text>
</comment>
<sequence length="383" mass="42203">MKNVLPPFIEIYRALIATPSISATEESLDQSNASLITLLAGWFSDLGFNVEVQPVPGTRNKFNMLASTGHGAGGLLLTGHTDTVPFDDGRWTRDPFTLTEHDNKLYGLGTADMKGFFAFILDALRDVDVTKLKKPLYILATADEETSMAGARYFSETTALRPDCAIIGEPTSLQPIRAHKGHISDVVRVLGQSGHSSDPARGVNAIELMHDAIGHIMQLRDSLKARYHYEAFTVPYPTLNLGHIHGGDASNRICACCELHMDIRPLPGMTLNDLNGLLNDALAPVSERWPGRLTVAELHPPIPGYECPPDHQLVEVVEKLLGTKTDVVNYCTEAPFMQTLCPTLVLGPGSINQAHQPDEYLETRFIKPTRELITQVVHHFCWH</sequence>
<gene>
    <name evidence="1" type="primary">argE</name>
    <name type="ordered locus">SSPA3684</name>
</gene>
<accession>B5BJN1</accession>
<keyword id="KW-0028">Amino-acid biosynthesis</keyword>
<keyword id="KW-0055">Arginine biosynthesis</keyword>
<keyword id="KW-0170">Cobalt</keyword>
<keyword id="KW-0963">Cytoplasm</keyword>
<keyword id="KW-0378">Hydrolase</keyword>
<keyword id="KW-0479">Metal-binding</keyword>
<keyword id="KW-0862">Zinc</keyword>